<evidence type="ECO:0000255" key="1">
    <source>
        <dbReference type="PROSITE-ProRule" id="PRU00238"/>
    </source>
</evidence>
<accession>Q10733</accession>
<comment type="function">
    <text>Involved in oxygen transport from the lung to the various peripheral tissues.</text>
</comment>
<comment type="subunit">
    <text>Heterotetramer of two alpha chains and two beta chains.</text>
</comment>
<comment type="tissue specificity">
    <text>Red blood cells.</text>
</comment>
<comment type="similarity">
    <text evidence="1">Belongs to the globin family.</text>
</comment>
<name>HBB_CARCR</name>
<gene>
    <name type="primary">HBB</name>
</gene>
<proteinExistence type="evidence at protein level"/>
<reference key="1">
    <citation type="journal article" date="1996" name="Biochem. J.">
        <title>Diving behaviour and haemoglobin function: the primary structure of the alpha- and beta-chains of the sea turtle (Caretta caretta) and its functional implications.</title>
        <authorList>
            <person name="Petruzzelli R."/>
            <person name="Aureli G."/>
            <person name="Lania A."/>
            <person name="Galtieri A."/>
            <person name="Desideri A."/>
            <person name="Giardina B."/>
        </authorList>
    </citation>
    <scope>PROTEIN SEQUENCE</scope>
</reference>
<dbReference type="PIR" id="S70614">
    <property type="entry name" value="S70614"/>
</dbReference>
<dbReference type="SMR" id="Q10733"/>
<dbReference type="GO" id="GO:0072562">
    <property type="term" value="C:blood microparticle"/>
    <property type="evidence" value="ECO:0007669"/>
    <property type="project" value="TreeGrafter"/>
</dbReference>
<dbReference type="GO" id="GO:0031838">
    <property type="term" value="C:haptoglobin-hemoglobin complex"/>
    <property type="evidence" value="ECO:0007669"/>
    <property type="project" value="TreeGrafter"/>
</dbReference>
<dbReference type="GO" id="GO:0005833">
    <property type="term" value="C:hemoglobin complex"/>
    <property type="evidence" value="ECO:0007669"/>
    <property type="project" value="InterPro"/>
</dbReference>
<dbReference type="GO" id="GO:0031720">
    <property type="term" value="F:haptoglobin binding"/>
    <property type="evidence" value="ECO:0007669"/>
    <property type="project" value="TreeGrafter"/>
</dbReference>
<dbReference type="GO" id="GO:0020037">
    <property type="term" value="F:heme binding"/>
    <property type="evidence" value="ECO:0007669"/>
    <property type="project" value="InterPro"/>
</dbReference>
<dbReference type="GO" id="GO:0046872">
    <property type="term" value="F:metal ion binding"/>
    <property type="evidence" value="ECO:0007669"/>
    <property type="project" value="UniProtKB-KW"/>
</dbReference>
<dbReference type="GO" id="GO:0043177">
    <property type="term" value="F:organic acid binding"/>
    <property type="evidence" value="ECO:0007669"/>
    <property type="project" value="TreeGrafter"/>
</dbReference>
<dbReference type="GO" id="GO:0019825">
    <property type="term" value="F:oxygen binding"/>
    <property type="evidence" value="ECO:0007669"/>
    <property type="project" value="InterPro"/>
</dbReference>
<dbReference type="GO" id="GO:0005344">
    <property type="term" value="F:oxygen carrier activity"/>
    <property type="evidence" value="ECO:0007669"/>
    <property type="project" value="UniProtKB-KW"/>
</dbReference>
<dbReference type="GO" id="GO:0004601">
    <property type="term" value="F:peroxidase activity"/>
    <property type="evidence" value="ECO:0007669"/>
    <property type="project" value="TreeGrafter"/>
</dbReference>
<dbReference type="GO" id="GO:0042744">
    <property type="term" value="P:hydrogen peroxide catabolic process"/>
    <property type="evidence" value="ECO:0007669"/>
    <property type="project" value="TreeGrafter"/>
</dbReference>
<dbReference type="CDD" id="cd08925">
    <property type="entry name" value="Hb-beta-like"/>
    <property type="match status" value="1"/>
</dbReference>
<dbReference type="FunFam" id="1.10.490.10:FF:000001">
    <property type="entry name" value="Hemoglobin subunit beta"/>
    <property type="match status" value="1"/>
</dbReference>
<dbReference type="Gene3D" id="1.10.490.10">
    <property type="entry name" value="Globins"/>
    <property type="match status" value="1"/>
</dbReference>
<dbReference type="InterPro" id="IPR000971">
    <property type="entry name" value="Globin"/>
</dbReference>
<dbReference type="InterPro" id="IPR009050">
    <property type="entry name" value="Globin-like_sf"/>
</dbReference>
<dbReference type="InterPro" id="IPR012292">
    <property type="entry name" value="Globin/Proto"/>
</dbReference>
<dbReference type="InterPro" id="IPR002337">
    <property type="entry name" value="Hemoglobin_b"/>
</dbReference>
<dbReference type="InterPro" id="IPR050056">
    <property type="entry name" value="Hemoglobin_oxygen_transport"/>
</dbReference>
<dbReference type="PANTHER" id="PTHR11442">
    <property type="entry name" value="HEMOGLOBIN FAMILY MEMBER"/>
    <property type="match status" value="1"/>
</dbReference>
<dbReference type="PANTHER" id="PTHR11442:SF7">
    <property type="entry name" value="HEMOGLOBIN SUBUNIT EPSILON"/>
    <property type="match status" value="1"/>
</dbReference>
<dbReference type="Pfam" id="PF00042">
    <property type="entry name" value="Globin"/>
    <property type="match status" value="1"/>
</dbReference>
<dbReference type="PRINTS" id="PR00814">
    <property type="entry name" value="BETAHAEM"/>
</dbReference>
<dbReference type="SUPFAM" id="SSF46458">
    <property type="entry name" value="Globin-like"/>
    <property type="match status" value="1"/>
</dbReference>
<dbReference type="PROSITE" id="PS01033">
    <property type="entry name" value="GLOBIN"/>
    <property type="match status" value="1"/>
</dbReference>
<keyword id="KW-0903">Direct protein sequencing</keyword>
<keyword id="KW-0349">Heme</keyword>
<keyword id="KW-0408">Iron</keyword>
<keyword id="KW-0479">Metal-binding</keyword>
<keyword id="KW-0561">Oxygen transport</keyword>
<keyword id="KW-0813">Transport</keyword>
<feature type="chain" id="PRO_0000052913" description="Hemoglobin subunit beta">
    <location>
        <begin position="1"/>
        <end position="146"/>
    </location>
</feature>
<feature type="domain" description="Globin" evidence="1">
    <location>
        <begin position="2"/>
        <end position="146"/>
    </location>
</feature>
<feature type="binding site" description="distal binding residue">
    <location>
        <position position="63"/>
    </location>
    <ligand>
        <name>heme b</name>
        <dbReference type="ChEBI" id="CHEBI:60344"/>
    </ligand>
    <ligandPart>
        <name>Fe</name>
        <dbReference type="ChEBI" id="CHEBI:18248"/>
    </ligandPart>
</feature>
<feature type="binding site" description="proximal binding residue">
    <location>
        <position position="92"/>
    </location>
    <ligand>
        <name>heme b</name>
        <dbReference type="ChEBI" id="CHEBI:60344"/>
    </ligand>
    <ligandPart>
        <name>Fe</name>
        <dbReference type="ChEBI" id="CHEBI:18248"/>
    </ligandPart>
</feature>
<feature type="modified residue" description="Blocked amino end (Thr)">
    <location>
        <position position="1"/>
    </location>
</feature>
<organism>
    <name type="scientific">Caretta caretta</name>
    <name type="common">Loggerhead sea turtle</name>
    <dbReference type="NCBI Taxonomy" id="8467"/>
    <lineage>
        <taxon>Eukaryota</taxon>
        <taxon>Metazoa</taxon>
        <taxon>Chordata</taxon>
        <taxon>Craniata</taxon>
        <taxon>Vertebrata</taxon>
        <taxon>Euteleostomi</taxon>
        <taxon>Archelosauria</taxon>
        <taxon>Testudinata</taxon>
        <taxon>Testudines</taxon>
        <taxon>Cryptodira</taxon>
        <taxon>Durocryptodira</taxon>
        <taxon>Americhelydia</taxon>
        <taxon>Chelonioidea</taxon>
        <taxon>Cheloniidae</taxon>
        <taxon>Caretta</taxon>
    </lineage>
</organism>
<sequence length="146" mass="16602">THWTAEERHYITSMWDKINVAEIGGESLARMLIVYPWTQKFFSDFGNLTSSSAIMHNVKIQEHGKKVLNSFGSAVKNMDHIKETFADLSKLHCETLHVDPENFKLLGSILIIVLAMHFGKEPTPTWQAAWQKLVSAVAHALTLQYH</sequence>
<protein>
    <recommendedName>
        <fullName>Hemoglobin subunit beta</fullName>
    </recommendedName>
    <alternativeName>
        <fullName>Beta-globin</fullName>
    </alternativeName>
    <alternativeName>
        <fullName>Hemoglobin beta chain</fullName>
    </alternativeName>
</protein>